<name>SAHH_MYCUA</name>
<protein>
    <recommendedName>
        <fullName evidence="1">Adenosylhomocysteinase</fullName>
        <ecNumber evidence="1">3.13.2.1</ecNumber>
    </recommendedName>
    <alternativeName>
        <fullName evidence="1">S-adenosyl-L-homocysteine hydrolase</fullName>
        <shortName evidence="1">AdoHcyase</shortName>
    </alternativeName>
</protein>
<evidence type="ECO:0000255" key="1">
    <source>
        <dbReference type="HAMAP-Rule" id="MF_00563"/>
    </source>
</evidence>
<feature type="chain" id="PRO_1000024737" description="Adenosylhomocysteinase">
    <location>
        <begin position="1"/>
        <end position="492"/>
    </location>
</feature>
<feature type="binding site" evidence="1">
    <location>
        <position position="68"/>
    </location>
    <ligand>
        <name>substrate</name>
    </ligand>
</feature>
<feature type="binding site" evidence="1">
    <location>
        <position position="153"/>
    </location>
    <ligand>
        <name>substrate</name>
    </ligand>
</feature>
<feature type="binding site" evidence="1">
    <location>
        <position position="215"/>
    </location>
    <ligand>
        <name>substrate</name>
    </ligand>
</feature>
<feature type="binding site" evidence="1">
    <location>
        <begin position="216"/>
        <end position="218"/>
    </location>
    <ligand>
        <name>NAD(+)</name>
        <dbReference type="ChEBI" id="CHEBI:57540"/>
    </ligand>
</feature>
<feature type="binding site" evidence="1">
    <location>
        <position position="245"/>
    </location>
    <ligand>
        <name>substrate</name>
    </ligand>
</feature>
<feature type="binding site" evidence="1">
    <location>
        <position position="249"/>
    </location>
    <ligand>
        <name>substrate</name>
    </ligand>
</feature>
<feature type="binding site" evidence="1">
    <location>
        <position position="250"/>
    </location>
    <ligand>
        <name>NAD(+)</name>
        <dbReference type="ChEBI" id="CHEBI:57540"/>
    </ligand>
</feature>
<feature type="binding site" evidence="1">
    <location>
        <begin position="279"/>
        <end position="284"/>
    </location>
    <ligand>
        <name>NAD(+)</name>
        <dbReference type="ChEBI" id="CHEBI:57540"/>
    </ligand>
</feature>
<feature type="binding site" evidence="1">
    <location>
        <position position="302"/>
    </location>
    <ligand>
        <name>NAD(+)</name>
        <dbReference type="ChEBI" id="CHEBI:57540"/>
    </ligand>
</feature>
<feature type="binding site" evidence="1">
    <location>
        <position position="337"/>
    </location>
    <ligand>
        <name>NAD(+)</name>
        <dbReference type="ChEBI" id="CHEBI:57540"/>
    </ligand>
</feature>
<feature type="binding site" evidence="1">
    <location>
        <begin position="358"/>
        <end position="360"/>
    </location>
    <ligand>
        <name>NAD(+)</name>
        <dbReference type="ChEBI" id="CHEBI:57540"/>
    </ligand>
</feature>
<feature type="binding site" evidence="1">
    <location>
        <position position="406"/>
    </location>
    <ligand>
        <name>NAD(+)</name>
        <dbReference type="ChEBI" id="CHEBI:57540"/>
    </ligand>
</feature>
<dbReference type="EC" id="3.13.2.1" evidence="1"/>
<dbReference type="EMBL" id="CP000325">
    <property type="protein sequence ID" value="ABL04924.1"/>
    <property type="molecule type" value="Genomic_DNA"/>
</dbReference>
<dbReference type="RefSeq" id="WP_011740539.1">
    <property type="nucleotide sequence ID" value="NC_008611.1"/>
</dbReference>
<dbReference type="SMR" id="A0PRF5"/>
<dbReference type="KEGG" id="mul:MUL_2592"/>
<dbReference type="eggNOG" id="COG0499">
    <property type="taxonomic scope" value="Bacteria"/>
</dbReference>
<dbReference type="HOGENOM" id="CLU_025194_2_1_11"/>
<dbReference type="UniPathway" id="UPA00314">
    <property type="reaction ID" value="UER00076"/>
</dbReference>
<dbReference type="Proteomes" id="UP000000765">
    <property type="component" value="Chromosome"/>
</dbReference>
<dbReference type="GO" id="GO:0005829">
    <property type="term" value="C:cytosol"/>
    <property type="evidence" value="ECO:0007669"/>
    <property type="project" value="TreeGrafter"/>
</dbReference>
<dbReference type="GO" id="GO:0004013">
    <property type="term" value="F:adenosylhomocysteinase activity"/>
    <property type="evidence" value="ECO:0007669"/>
    <property type="project" value="UniProtKB-UniRule"/>
</dbReference>
<dbReference type="GO" id="GO:0071269">
    <property type="term" value="P:L-homocysteine biosynthetic process"/>
    <property type="evidence" value="ECO:0007669"/>
    <property type="project" value="UniProtKB-UniRule"/>
</dbReference>
<dbReference type="GO" id="GO:0006730">
    <property type="term" value="P:one-carbon metabolic process"/>
    <property type="evidence" value="ECO:0007669"/>
    <property type="project" value="UniProtKB-KW"/>
</dbReference>
<dbReference type="GO" id="GO:0033353">
    <property type="term" value="P:S-adenosylmethionine cycle"/>
    <property type="evidence" value="ECO:0007669"/>
    <property type="project" value="TreeGrafter"/>
</dbReference>
<dbReference type="CDD" id="cd00401">
    <property type="entry name" value="SAHH"/>
    <property type="match status" value="1"/>
</dbReference>
<dbReference type="FunFam" id="3.40.50.720:FF:000004">
    <property type="entry name" value="Adenosylhomocysteinase"/>
    <property type="match status" value="1"/>
</dbReference>
<dbReference type="Gene3D" id="3.40.50.1480">
    <property type="entry name" value="Adenosylhomocysteinase-like"/>
    <property type="match status" value="1"/>
</dbReference>
<dbReference type="Gene3D" id="3.40.50.720">
    <property type="entry name" value="NAD(P)-binding Rossmann-like Domain"/>
    <property type="match status" value="1"/>
</dbReference>
<dbReference type="HAMAP" id="MF_00563">
    <property type="entry name" value="AdoHcyase"/>
    <property type="match status" value="1"/>
</dbReference>
<dbReference type="InterPro" id="IPR042172">
    <property type="entry name" value="Adenosylhomocyst_ase-like_sf"/>
</dbReference>
<dbReference type="InterPro" id="IPR000043">
    <property type="entry name" value="Adenosylhomocysteinase-like"/>
</dbReference>
<dbReference type="InterPro" id="IPR015878">
    <property type="entry name" value="Ado_hCys_hydrolase_NAD-bd"/>
</dbReference>
<dbReference type="InterPro" id="IPR036291">
    <property type="entry name" value="NAD(P)-bd_dom_sf"/>
</dbReference>
<dbReference type="InterPro" id="IPR020082">
    <property type="entry name" value="S-Ado-L-homoCys_hydrolase_CS"/>
</dbReference>
<dbReference type="NCBIfam" id="TIGR00936">
    <property type="entry name" value="ahcY"/>
    <property type="match status" value="1"/>
</dbReference>
<dbReference type="NCBIfam" id="NF004005">
    <property type="entry name" value="PRK05476.2-3"/>
    <property type="match status" value="1"/>
</dbReference>
<dbReference type="PANTHER" id="PTHR23420">
    <property type="entry name" value="ADENOSYLHOMOCYSTEINASE"/>
    <property type="match status" value="1"/>
</dbReference>
<dbReference type="PANTHER" id="PTHR23420:SF0">
    <property type="entry name" value="ADENOSYLHOMOCYSTEINASE"/>
    <property type="match status" value="1"/>
</dbReference>
<dbReference type="Pfam" id="PF05221">
    <property type="entry name" value="AdoHcyase"/>
    <property type="match status" value="1"/>
</dbReference>
<dbReference type="Pfam" id="PF00670">
    <property type="entry name" value="AdoHcyase_NAD"/>
    <property type="match status" value="1"/>
</dbReference>
<dbReference type="PIRSF" id="PIRSF001109">
    <property type="entry name" value="Ad_hcy_hydrolase"/>
    <property type="match status" value="1"/>
</dbReference>
<dbReference type="SMART" id="SM00996">
    <property type="entry name" value="AdoHcyase"/>
    <property type="match status" value="1"/>
</dbReference>
<dbReference type="SMART" id="SM00997">
    <property type="entry name" value="AdoHcyase_NAD"/>
    <property type="match status" value="1"/>
</dbReference>
<dbReference type="SUPFAM" id="SSF52283">
    <property type="entry name" value="Formate/glycerate dehydrogenase catalytic domain-like"/>
    <property type="match status" value="1"/>
</dbReference>
<dbReference type="SUPFAM" id="SSF51735">
    <property type="entry name" value="NAD(P)-binding Rossmann-fold domains"/>
    <property type="match status" value="1"/>
</dbReference>
<dbReference type="PROSITE" id="PS00738">
    <property type="entry name" value="ADOHCYASE_1"/>
    <property type="match status" value="1"/>
</dbReference>
<dbReference type="PROSITE" id="PS00739">
    <property type="entry name" value="ADOHCYASE_2"/>
    <property type="match status" value="1"/>
</dbReference>
<reference key="1">
    <citation type="journal article" date="2007" name="Genome Res.">
        <title>Reductive evolution and niche adaptation inferred from the genome of Mycobacterium ulcerans, the causative agent of Buruli ulcer.</title>
        <authorList>
            <person name="Stinear T.P."/>
            <person name="Seemann T."/>
            <person name="Pidot S."/>
            <person name="Frigui W."/>
            <person name="Reysset G."/>
            <person name="Garnier T."/>
            <person name="Meurice G."/>
            <person name="Simon D."/>
            <person name="Bouchier C."/>
            <person name="Ma L."/>
            <person name="Tichit M."/>
            <person name="Porter J.L."/>
            <person name="Ryan J."/>
            <person name="Johnson P.D.R."/>
            <person name="Davies J.K."/>
            <person name="Jenkin G.A."/>
            <person name="Small P.L.C."/>
            <person name="Jones L.M."/>
            <person name="Tekaia F."/>
            <person name="Laval F."/>
            <person name="Daffe M."/>
            <person name="Parkhill J."/>
            <person name="Cole S.T."/>
        </authorList>
    </citation>
    <scope>NUCLEOTIDE SEQUENCE [LARGE SCALE GENOMIC DNA]</scope>
    <source>
        <strain>Agy99</strain>
    </source>
</reference>
<sequence>MTTTETSLSADTKNGIDFKIADLSLADFGRKELRIAEHEMPGLMSLRREYAEVQPLKGARISGSLHMTVQTAVLIETLTALGAEVRWASCNIFSTQDHAAAAVVVGPHGTPEEPKGVPVFAWKGESLEEYWWCAEQMLTWPDSDKPANMILDDGGDATMLVLRGMQYEKAGVVPPAEEDDSAEWKVFLGLLRSRFETDKGKWTKIAESVKGVTEETTTGVLRLYQFAEAGDLAFPAINVNDSVTKSKFDNKYGTRHSLIDGINRGTDALIGGKKVLICGYGDVGKGCAEAMKGQGARVSVTEIDPINALQAMMEGFDVVTVEDAIGDADIVVTSTGNKDIIMLEHIKAMKDHSILGNIGHFDNEIDMAGLERSGATRTNIKPQVDLWTFGDTGRSIIVLSEGRLLNLGNATGHPSFVMSNSFANQTIAQIELWTKNDEYDNEVYRLPKHLDEKVARIHVEALGGRLTKLTKDQAEYLGVDVEGPYKPDHYRY</sequence>
<proteinExistence type="inferred from homology"/>
<comment type="function">
    <text evidence="1">May play a key role in the regulation of the intracellular concentration of adenosylhomocysteine.</text>
</comment>
<comment type="catalytic activity">
    <reaction evidence="1">
        <text>S-adenosyl-L-homocysteine + H2O = L-homocysteine + adenosine</text>
        <dbReference type="Rhea" id="RHEA:21708"/>
        <dbReference type="ChEBI" id="CHEBI:15377"/>
        <dbReference type="ChEBI" id="CHEBI:16335"/>
        <dbReference type="ChEBI" id="CHEBI:57856"/>
        <dbReference type="ChEBI" id="CHEBI:58199"/>
        <dbReference type="EC" id="3.13.2.1"/>
    </reaction>
</comment>
<comment type="cofactor">
    <cofactor evidence="1">
        <name>NAD(+)</name>
        <dbReference type="ChEBI" id="CHEBI:57540"/>
    </cofactor>
    <text evidence="1">Binds 1 NAD(+) per subunit.</text>
</comment>
<comment type="pathway">
    <text evidence="1">Amino-acid biosynthesis; L-homocysteine biosynthesis; L-homocysteine from S-adenosyl-L-homocysteine: step 1/1.</text>
</comment>
<comment type="subcellular location">
    <subcellularLocation>
        <location evidence="1">Cytoplasm</location>
    </subcellularLocation>
</comment>
<comment type="similarity">
    <text evidence="1">Belongs to the adenosylhomocysteinase family.</text>
</comment>
<keyword id="KW-0963">Cytoplasm</keyword>
<keyword id="KW-0378">Hydrolase</keyword>
<keyword id="KW-0520">NAD</keyword>
<keyword id="KW-0554">One-carbon metabolism</keyword>
<accession>A0PRF5</accession>
<gene>
    <name evidence="1" type="primary">ahcY</name>
    <name type="ordered locus">MUL_2592</name>
</gene>
<organism>
    <name type="scientific">Mycobacterium ulcerans (strain Agy99)</name>
    <dbReference type="NCBI Taxonomy" id="362242"/>
    <lineage>
        <taxon>Bacteria</taxon>
        <taxon>Bacillati</taxon>
        <taxon>Actinomycetota</taxon>
        <taxon>Actinomycetes</taxon>
        <taxon>Mycobacteriales</taxon>
        <taxon>Mycobacteriaceae</taxon>
        <taxon>Mycobacterium</taxon>
        <taxon>Mycobacterium ulcerans group</taxon>
    </lineage>
</organism>